<feature type="chain" id="PRO_1000061652" description="Coenzyme PQQ synthesis protein B">
    <location>
        <begin position="1"/>
        <end position="304"/>
    </location>
</feature>
<accession>A6V6I3</accession>
<proteinExistence type="inferred from homology"/>
<sequence>MHIRILGSAAGGGFPQWNCNCRNCRGVRDGSVAAQPRTQSSIALSDDGERWILCNASPDIRVQIAAFPALQPARRPRDTAIGAIVLLDSQIDHTTGLLSLREGCPHEVWCTQMVHQDLSEGFPLFRMLSHWNGGLRHRPIALDGEPFAIPACPRLRFTAIPLRSSAPPYSPHRGDPHPGDNIGLFVEDLDSAGTLFYAPGLGEVDEALLEWMRRADCLLVDGTLWRDDEMLACEVGDKLGRQMGHLAQSGPGGMLEVLAKVPAARKVLIHINNTNPILDTASAERAELDASGIEVAWDGMHIQL</sequence>
<keyword id="KW-0884">PQQ biosynthesis</keyword>
<keyword id="KW-0813">Transport</keyword>
<protein>
    <recommendedName>
        <fullName evidence="1">Coenzyme PQQ synthesis protein B</fullName>
    </recommendedName>
    <alternativeName>
        <fullName evidence="1">Pyrroloquinoline quinone biosynthesis protein B</fullName>
    </alternativeName>
</protein>
<evidence type="ECO:0000255" key="1">
    <source>
        <dbReference type="HAMAP-Rule" id="MF_00653"/>
    </source>
</evidence>
<comment type="function">
    <text evidence="1">May be involved in the transport of PQQ or its precursor to the periplasm.</text>
</comment>
<comment type="pathway">
    <text evidence="1">Cofactor biosynthesis; pyrroloquinoline quinone biosynthesis.</text>
</comment>
<comment type="similarity">
    <text evidence="1">Belongs to the PqqB family.</text>
</comment>
<gene>
    <name evidence="1" type="primary">pqqB</name>
    <name type="ordered locus">PSPA7_3308</name>
</gene>
<dbReference type="EMBL" id="CP000744">
    <property type="protein sequence ID" value="ABR83967.1"/>
    <property type="molecule type" value="Genomic_DNA"/>
</dbReference>
<dbReference type="RefSeq" id="WP_003157536.1">
    <property type="nucleotide sequence ID" value="NC_009656.1"/>
</dbReference>
<dbReference type="SMR" id="A6V6I3"/>
<dbReference type="KEGG" id="pap:PSPA7_3308"/>
<dbReference type="HOGENOM" id="CLU_061120_0_0_6"/>
<dbReference type="UniPathway" id="UPA00539"/>
<dbReference type="Proteomes" id="UP000001582">
    <property type="component" value="Chromosome"/>
</dbReference>
<dbReference type="GO" id="GO:0018189">
    <property type="term" value="P:pyrroloquinoline quinone biosynthetic process"/>
    <property type="evidence" value="ECO:0007669"/>
    <property type="project" value="UniProtKB-UniRule"/>
</dbReference>
<dbReference type="CDD" id="cd16274">
    <property type="entry name" value="PQQB-like_MBL-fold"/>
    <property type="match status" value="1"/>
</dbReference>
<dbReference type="Gene3D" id="3.60.15.10">
    <property type="entry name" value="Ribonuclease Z/Hydroxyacylglutathione hydrolase-like"/>
    <property type="match status" value="1"/>
</dbReference>
<dbReference type="HAMAP" id="MF_00653">
    <property type="entry name" value="PQQ_syn_PqqB"/>
    <property type="match status" value="1"/>
</dbReference>
<dbReference type="InterPro" id="IPR001279">
    <property type="entry name" value="Metallo-B-lactamas"/>
</dbReference>
<dbReference type="InterPro" id="IPR011842">
    <property type="entry name" value="PQQ_synth_PqqB"/>
</dbReference>
<dbReference type="InterPro" id="IPR036866">
    <property type="entry name" value="RibonucZ/Hydroxyglut_hydro"/>
</dbReference>
<dbReference type="NCBIfam" id="TIGR02108">
    <property type="entry name" value="PQQ_syn_pqqB"/>
    <property type="match status" value="1"/>
</dbReference>
<dbReference type="PANTHER" id="PTHR42663:SF7">
    <property type="entry name" value="COENZYME PQQ SYNTHESIS PROTEIN B"/>
    <property type="match status" value="1"/>
</dbReference>
<dbReference type="PANTHER" id="PTHR42663">
    <property type="entry name" value="HYDROLASE C777.06C-RELATED-RELATED"/>
    <property type="match status" value="1"/>
</dbReference>
<dbReference type="Pfam" id="PF12706">
    <property type="entry name" value="Lactamase_B_2"/>
    <property type="match status" value="1"/>
</dbReference>
<dbReference type="SUPFAM" id="SSF56281">
    <property type="entry name" value="Metallo-hydrolase/oxidoreductase"/>
    <property type="match status" value="1"/>
</dbReference>
<reference key="1">
    <citation type="submission" date="2007-06" db="EMBL/GenBank/DDBJ databases">
        <authorList>
            <person name="Dodson R.J."/>
            <person name="Harkins D."/>
            <person name="Paulsen I.T."/>
        </authorList>
    </citation>
    <scope>NUCLEOTIDE SEQUENCE [LARGE SCALE GENOMIC DNA]</scope>
    <source>
        <strain>DSM 24068 / PA7</strain>
    </source>
</reference>
<name>PQQB_PSEP7</name>
<organism>
    <name type="scientific">Pseudomonas paraeruginosa (strain DSM 24068 / PA7)</name>
    <name type="common">Pseudomonas aeruginosa (strain PA7)</name>
    <dbReference type="NCBI Taxonomy" id="381754"/>
    <lineage>
        <taxon>Bacteria</taxon>
        <taxon>Pseudomonadati</taxon>
        <taxon>Pseudomonadota</taxon>
        <taxon>Gammaproteobacteria</taxon>
        <taxon>Pseudomonadales</taxon>
        <taxon>Pseudomonadaceae</taxon>
        <taxon>Pseudomonas</taxon>
        <taxon>Pseudomonas paraeruginosa</taxon>
    </lineage>
</organism>